<sequence>MSLIRLNIDSFRNIQLAQLSPSSGINLIYGQNGSGKTSILEAIYFLGMGRSFRSHLSQRVINNEQDKLTLFATLNLPRGDSKIGLRRFRSGETEVKIDGEKVKRLSTLAETLPIQVITPESFSLLFEGPKSRRQFIDWGAFHSDPQFYAAWVNVRRVLKQRNQLLRNNSSYDQIQYWDREFVRYTEQVTEIRNRYVDSLNELLKGIIGEFLPQVDVKVSFTRGWDSKTDFAQLLESQYPRDLATGHTVSGPHKADLRLRVGSLPAQDALSRGQLKLLVCALRIAQGKLLKQQIDKHSIYLVDDLPSELDAQHRQLLLKQLVDTGAQVFVTAIEPAAIVDSLHTPPSRMFHVEQGRVTVIE</sequence>
<dbReference type="EMBL" id="CP000446">
    <property type="protein sequence ID" value="ABI37085.1"/>
    <property type="molecule type" value="Genomic_DNA"/>
</dbReference>
<dbReference type="RefSeq" id="WP_011620840.1">
    <property type="nucleotide sequence ID" value="NC_008321.1"/>
</dbReference>
<dbReference type="SMR" id="Q0HPD2"/>
<dbReference type="KEGG" id="she:Shewmr4_0003"/>
<dbReference type="HOGENOM" id="CLU_040267_0_0_6"/>
<dbReference type="GO" id="GO:0005737">
    <property type="term" value="C:cytoplasm"/>
    <property type="evidence" value="ECO:0007669"/>
    <property type="project" value="UniProtKB-SubCell"/>
</dbReference>
<dbReference type="GO" id="GO:0005524">
    <property type="term" value="F:ATP binding"/>
    <property type="evidence" value="ECO:0007669"/>
    <property type="project" value="UniProtKB-UniRule"/>
</dbReference>
<dbReference type="GO" id="GO:0003697">
    <property type="term" value="F:single-stranded DNA binding"/>
    <property type="evidence" value="ECO:0007669"/>
    <property type="project" value="UniProtKB-UniRule"/>
</dbReference>
<dbReference type="GO" id="GO:0006260">
    <property type="term" value="P:DNA replication"/>
    <property type="evidence" value="ECO:0007669"/>
    <property type="project" value="UniProtKB-UniRule"/>
</dbReference>
<dbReference type="GO" id="GO:0000731">
    <property type="term" value="P:DNA synthesis involved in DNA repair"/>
    <property type="evidence" value="ECO:0007669"/>
    <property type="project" value="TreeGrafter"/>
</dbReference>
<dbReference type="GO" id="GO:0006302">
    <property type="term" value="P:double-strand break repair"/>
    <property type="evidence" value="ECO:0007669"/>
    <property type="project" value="TreeGrafter"/>
</dbReference>
<dbReference type="GO" id="GO:0009432">
    <property type="term" value="P:SOS response"/>
    <property type="evidence" value="ECO:0007669"/>
    <property type="project" value="UniProtKB-UniRule"/>
</dbReference>
<dbReference type="Gene3D" id="3.40.50.300">
    <property type="entry name" value="P-loop containing nucleotide triphosphate hydrolases"/>
    <property type="match status" value="1"/>
</dbReference>
<dbReference type="Gene3D" id="1.20.1050.90">
    <property type="entry name" value="RecF/RecN/SMC, N-terminal domain"/>
    <property type="match status" value="1"/>
</dbReference>
<dbReference type="HAMAP" id="MF_00365">
    <property type="entry name" value="RecF"/>
    <property type="match status" value="1"/>
</dbReference>
<dbReference type="InterPro" id="IPR001238">
    <property type="entry name" value="DNA-binding_RecF"/>
</dbReference>
<dbReference type="InterPro" id="IPR018078">
    <property type="entry name" value="DNA-binding_RecF_CS"/>
</dbReference>
<dbReference type="InterPro" id="IPR027417">
    <property type="entry name" value="P-loop_NTPase"/>
</dbReference>
<dbReference type="InterPro" id="IPR003395">
    <property type="entry name" value="RecF/RecN/SMC_N"/>
</dbReference>
<dbReference type="InterPro" id="IPR042174">
    <property type="entry name" value="RecF_2"/>
</dbReference>
<dbReference type="NCBIfam" id="TIGR00611">
    <property type="entry name" value="recf"/>
    <property type="match status" value="1"/>
</dbReference>
<dbReference type="PANTHER" id="PTHR32182">
    <property type="entry name" value="DNA REPLICATION AND REPAIR PROTEIN RECF"/>
    <property type="match status" value="1"/>
</dbReference>
<dbReference type="PANTHER" id="PTHR32182:SF0">
    <property type="entry name" value="DNA REPLICATION AND REPAIR PROTEIN RECF"/>
    <property type="match status" value="1"/>
</dbReference>
<dbReference type="Pfam" id="PF02463">
    <property type="entry name" value="SMC_N"/>
    <property type="match status" value="1"/>
</dbReference>
<dbReference type="SUPFAM" id="SSF52540">
    <property type="entry name" value="P-loop containing nucleoside triphosphate hydrolases"/>
    <property type="match status" value="1"/>
</dbReference>
<dbReference type="PROSITE" id="PS00617">
    <property type="entry name" value="RECF_1"/>
    <property type="match status" value="1"/>
</dbReference>
<dbReference type="PROSITE" id="PS00618">
    <property type="entry name" value="RECF_2"/>
    <property type="match status" value="1"/>
</dbReference>
<name>RECF_SHESM</name>
<gene>
    <name evidence="1" type="primary">recF</name>
    <name type="ordered locus">Shewmr4_0003</name>
</gene>
<accession>Q0HPD2</accession>
<keyword id="KW-0067">ATP-binding</keyword>
<keyword id="KW-0963">Cytoplasm</keyword>
<keyword id="KW-0227">DNA damage</keyword>
<keyword id="KW-0234">DNA repair</keyword>
<keyword id="KW-0235">DNA replication</keyword>
<keyword id="KW-0238">DNA-binding</keyword>
<keyword id="KW-0547">Nucleotide-binding</keyword>
<keyword id="KW-0742">SOS response</keyword>
<reference key="1">
    <citation type="submission" date="2006-08" db="EMBL/GenBank/DDBJ databases">
        <title>Complete sequence of Shewanella sp. MR-4.</title>
        <authorList>
            <consortium name="US DOE Joint Genome Institute"/>
            <person name="Copeland A."/>
            <person name="Lucas S."/>
            <person name="Lapidus A."/>
            <person name="Barry K."/>
            <person name="Detter J.C."/>
            <person name="Glavina del Rio T."/>
            <person name="Hammon N."/>
            <person name="Israni S."/>
            <person name="Dalin E."/>
            <person name="Tice H."/>
            <person name="Pitluck S."/>
            <person name="Kiss H."/>
            <person name="Brettin T."/>
            <person name="Bruce D."/>
            <person name="Han C."/>
            <person name="Tapia R."/>
            <person name="Gilna P."/>
            <person name="Schmutz J."/>
            <person name="Larimer F."/>
            <person name="Land M."/>
            <person name="Hauser L."/>
            <person name="Kyrpides N."/>
            <person name="Mikhailova N."/>
            <person name="Nealson K."/>
            <person name="Konstantinidis K."/>
            <person name="Klappenbach J."/>
            <person name="Tiedje J."/>
            <person name="Richardson P."/>
        </authorList>
    </citation>
    <scope>NUCLEOTIDE SEQUENCE [LARGE SCALE GENOMIC DNA]</scope>
    <source>
        <strain>MR-4</strain>
    </source>
</reference>
<proteinExistence type="inferred from homology"/>
<comment type="function">
    <text evidence="1">The RecF protein is involved in DNA metabolism; it is required for DNA replication and normal SOS inducibility. RecF binds preferentially to single-stranded, linear DNA. It also seems to bind ATP.</text>
</comment>
<comment type="subcellular location">
    <subcellularLocation>
        <location evidence="1">Cytoplasm</location>
    </subcellularLocation>
</comment>
<comment type="similarity">
    <text evidence="1">Belongs to the RecF family.</text>
</comment>
<feature type="chain" id="PRO_1000048577" description="DNA replication and repair protein RecF">
    <location>
        <begin position="1"/>
        <end position="360"/>
    </location>
</feature>
<feature type="binding site" evidence="1">
    <location>
        <begin position="30"/>
        <end position="37"/>
    </location>
    <ligand>
        <name>ATP</name>
        <dbReference type="ChEBI" id="CHEBI:30616"/>
    </ligand>
</feature>
<protein>
    <recommendedName>
        <fullName evidence="1">DNA replication and repair protein RecF</fullName>
    </recommendedName>
</protein>
<evidence type="ECO:0000255" key="1">
    <source>
        <dbReference type="HAMAP-Rule" id="MF_00365"/>
    </source>
</evidence>
<organism>
    <name type="scientific">Shewanella sp. (strain MR-4)</name>
    <dbReference type="NCBI Taxonomy" id="60480"/>
    <lineage>
        <taxon>Bacteria</taxon>
        <taxon>Pseudomonadati</taxon>
        <taxon>Pseudomonadota</taxon>
        <taxon>Gammaproteobacteria</taxon>
        <taxon>Alteromonadales</taxon>
        <taxon>Shewanellaceae</taxon>
        <taxon>Shewanella</taxon>
    </lineage>
</organism>